<sequence>MSQVELPLIDYAAITPILVILGAACLGVLVEAFLPRHQRWSAQVGLSLLALVAAGVALALHARQGGTGVTTLSDSLAIDAPTLFLWGTLLALGLGAILLIADRSVESGGAFVAESNDTGPAGAGEMTRATAAVAGMRTEVFPLALFALGGMMVFCAANDLLTMFIALEVLSLPLYLMCGLAKRRRLLSQEAAVKYFLLGAFASAFFLYGLALLYGYAGSVKLSAIAAATAGTDRSDTLLFAGLGLLVVGLLFKASVGPFHTWTPDVYQGAPTAVTGFMAACTKVAAFGGILRVLQVAFEASSWEWRGVLYAVAIVSMAIGVVLGLTQSDIKRMIAYSSVAHAGFLLVGSIALTERGLAGTMFYLLAYGFTTIAIFGVISLVRTSDGEATHLSDWAGLAKRSPVVAWVFTFLLLALAGIPMTSGFVGKFVVFEAALADGMAPLVVVALVASAVAAFFYLRVIVLMHFSEPAEDGPTVSVPGAFTTAAITLGVVVTLLLGVLPSLALDWANLGGFVS</sequence>
<dbReference type="EC" id="7.1.1.-" evidence="1"/>
<dbReference type="EMBL" id="AM420293">
    <property type="protein sequence ID" value="CAM06053.1"/>
    <property type="molecule type" value="Genomic_DNA"/>
</dbReference>
<dbReference type="RefSeq" id="WP_009944064.1">
    <property type="nucleotide sequence ID" value="NC_009142.1"/>
</dbReference>
<dbReference type="SMR" id="A4FPS8"/>
<dbReference type="STRING" id="405948.SACE_6889"/>
<dbReference type="KEGG" id="sen:SACE_6889"/>
<dbReference type="eggNOG" id="COG1007">
    <property type="taxonomic scope" value="Bacteria"/>
</dbReference>
<dbReference type="HOGENOM" id="CLU_007100_1_1_11"/>
<dbReference type="OrthoDB" id="9811718at2"/>
<dbReference type="Proteomes" id="UP000006728">
    <property type="component" value="Chromosome"/>
</dbReference>
<dbReference type="GO" id="GO:0005886">
    <property type="term" value="C:plasma membrane"/>
    <property type="evidence" value="ECO:0007669"/>
    <property type="project" value="UniProtKB-SubCell"/>
</dbReference>
<dbReference type="GO" id="GO:0008137">
    <property type="term" value="F:NADH dehydrogenase (ubiquinone) activity"/>
    <property type="evidence" value="ECO:0007669"/>
    <property type="project" value="InterPro"/>
</dbReference>
<dbReference type="GO" id="GO:0050136">
    <property type="term" value="F:NADH:ubiquinone reductase (non-electrogenic) activity"/>
    <property type="evidence" value="ECO:0007669"/>
    <property type="project" value="UniProtKB-UniRule"/>
</dbReference>
<dbReference type="GO" id="GO:0048038">
    <property type="term" value="F:quinone binding"/>
    <property type="evidence" value="ECO:0007669"/>
    <property type="project" value="UniProtKB-KW"/>
</dbReference>
<dbReference type="GO" id="GO:0042773">
    <property type="term" value="P:ATP synthesis coupled electron transport"/>
    <property type="evidence" value="ECO:0007669"/>
    <property type="project" value="InterPro"/>
</dbReference>
<dbReference type="HAMAP" id="MF_00445">
    <property type="entry name" value="NDH1_NuoN_1"/>
    <property type="match status" value="1"/>
</dbReference>
<dbReference type="InterPro" id="IPR010096">
    <property type="entry name" value="NADH-Q_OxRdtase_suN/2"/>
</dbReference>
<dbReference type="InterPro" id="IPR003918">
    <property type="entry name" value="NADH_UbQ_OxRdtase"/>
</dbReference>
<dbReference type="InterPro" id="IPR001750">
    <property type="entry name" value="ND/Mrp_TM"/>
</dbReference>
<dbReference type="NCBIfam" id="TIGR01770">
    <property type="entry name" value="NDH_I_N"/>
    <property type="match status" value="1"/>
</dbReference>
<dbReference type="NCBIfam" id="NF004441">
    <property type="entry name" value="PRK05777.1-4"/>
    <property type="match status" value="1"/>
</dbReference>
<dbReference type="PANTHER" id="PTHR22773">
    <property type="entry name" value="NADH DEHYDROGENASE"/>
    <property type="match status" value="1"/>
</dbReference>
<dbReference type="Pfam" id="PF00361">
    <property type="entry name" value="Proton_antipo_M"/>
    <property type="match status" value="1"/>
</dbReference>
<dbReference type="PRINTS" id="PR01437">
    <property type="entry name" value="NUOXDRDTASE4"/>
</dbReference>
<feature type="chain" id="PRO_0000391219" description="NADH-quinone oxidoreductase subunit N">
    <location>
        <begin position="1"/>
        <end position="515"/>
    </location>
</feature>
<feature type="transmembrane region" description="Helical" evidence="1">
    <location>
        <begin position="14"/>
        <end position="34"/>
    </location>
</feature>
<feature type="transmembrane region" description="Helical" evidence="1">
    <location>
        <begin position="40"/>
        <end position="60"/>
    </location>
</feature>
<feature type="transmembrane region" description="Helical" evidence="1">
    <location>
        <begin position="80"/>
        <end position="100"/>
    </location>
</feature>
<feature type="transmembrane region" description="Helical" evidence="1">
    <location>
        <begin position="138"/>
        <end position="158"/>
    </location>
</feature>
<feature type="transmembrane region" description="Helical" evidence="1">
    <location>
        <begin position="160"/>
        <end position="180"/>
    </location>
</feature>
<feature type="transmembrane region" description="Helical" evidence="1">
    <location>
        <begin position="195"/>
        <end position="215"/>
    </location>
</feature>
<feature type="transmembrane region" description="Helical" evidence="1">
    <location>
        <begin position="239"/>
        <end position="259"/>
    </location>
</feature>
<feature type="transmembrane region" description="Helical" evidence="1">
    <location>
        <begin position="271"/>
        <end position="291"/>
    </location>
</feature>
<feature type="transmembrane region" description="Helical" evidence="1">
    <location>
        <begin position="307"/>
        <end position="327"/>
    </location>
</feature>
<feature type="transmembrane region" description="Helical" evidence="1">
    <location>
        <begin position="333"/>
        <end position="353"/>
    </location>
</feature>
<feature type="transmembrane region" description="Helical" evidence="1">
    <location>
        <begin position="361"/>
        <end position="381"/>
    </location>
</feature>
<feature type="transmembrane region" description="Helical" evidence="1">
    <location>
        <begin position="404"/>
        <end position="424"/>
    </location>
</feature>
<feature type="transmembrane region" description="Helical" evidence="1">
    <location>
        <begin position="438"/>
        <end position="458"/>
    </location>
</feature>
<feature type="transmembrane region" description="Helical" evidence="1">
    <location>
        <begin position="485"/>
        <end position="505"/>
    </location>
</feature>
<name>NUON_SACEN</name>
<reference key="1">
    <citation type="journal article" date="2007" name="Nat. Biotechnol.">
        <title>Complete genome sequence of the erythromycin-producing bacterium Saccharopolyspora erythraea NRRL23338.</title>
        <authorList>
            <person name="Oliynyk M."/>
            <person name="Samborskyy M."/>
            <person name="Lester J.B."/>
            <person name="Mironenko T."/>
            <person name="Scott N."/>
            <person name="Dickens S."/>
            <person name="Haydock S.F."/>
            <person name="Leadlay P.F."/>
        </authorList>
    </citation>
    <scope>NUCLEOTIDE SEQUENCE [LARGE SCALE GENOMIC DNA]</scope>
    <source>
        <strain>ATCC 11635 / DSM 40517 / JCM 4748 / NBRC 13426 / NCIMB 8594 / NRRL 2338</strain>
    </source>
</reference>
<evidence type="ECO:0000255" key="1">
    <source>
        <dbReference type="HAMAP-Rule" id="MF_00445"/>
    </source>
</evidence>
<organism>
    <name type="scientific">Saccharopolyspora erythraea (strain ATCC 11635 / DSM 40517 / JCM 4748 / NBRC 13426 / NCIMB 8594 / NRRL 2338)</name>
    <dbReference type="NCBI Taxonomy" id="405948"/>
    <lineage>
        <taxon>Bacteria</taxon>
        <taxon>Bacillati</taxon>
        <taxon>Actinomycetota</taxon>
        <taxon>Actinomycetes</taxon>
        <taxon>Pseudonocardiales</taxon>
        <taxon>Pseudonocardiaceae</taxon>
        <taxon>Saccharopolyspora</taxon>
    </lineage>
</organism>
<proteinExistence type="inferred from homology"/>
<comment type="function">
    <text evidence="1">NDH-1 shuttles electrons from NADH, via FMN and iron-sulfur (Fe-S) centers, to quinones in the respiratory chain. The immediate electron acceptor for the enzyme in this species is believed to be a menaquinone. Couples the redox reaction to proton translocation (for every two electrons transferred, four hydrogen ions are translocated across the cytoplasmic membrane), and thus conserves the redox energy in a proton gradient.</text>
</comment>
<comment type="catalytic activity">
    <reaction evidence="1">
        <text>a quinone + NADH + 5 H(+)(in) = a quinol + NAD(+) + 4 H(+)(out)</text>
        <dbReference type="Rhea" id="RHEA:57888"/>
        <dbReference type="ChEBI" id="CHEBI:15378"/>
        <dbReference type="ChEBI" id="CHEBI:24646"/>
        <dbReference type="ChEBI" id="CHEBI:57540"/>
        <dbReference type="ChEBI" id="CHEBI:57945"/>
        <dbReference type="ChEBI" id="CHEBI:132124"/>
    </reaction>
</comment>
<comment type="subunit">
    <text evidence="1">NDH-1 is composed of 14 different subunits. Subunits NuoA, H, J, K, L, M, N constitute the membrane sector of the complex.</text>
</comment>
<comment type="subcellular location">
    <subcellularLocation>
        <location evidence="1">Cell membrane</location>
        <topology evidence="1">Multi-pass membrane protein</topology>
    </subcellularLocation>
</comment>
<comment type="similarity">
    <text evidence="1">Belongs to the complex I subunit 2 family.</text>
</comment>
<accession>A4FPS8</accession>
<gene>
    <name evidence="1" type="primary">nuoN</name>
    <name type="ordered locus">SACE_6889</name>
</gene>
<keyword id="KW-1003">Cell membrane</keyword>
<keyword id="KW-0472">Membrane</keyword>
<keyword id="KW-0520">NAD</keyword>
<keyword id="KW-0874">Quinone</keyword>
<keyword id="KW-1185">Reference proteome</keyword>
<keyword id="KW-1278">Translocase</keyword>
<keyword id="KW-0812">Transmembrane</keyword>
<keyword id="KW-1133">Transmembrane helix</keyword>
<keyword id="KW-0813">Transport</keyword>
<protein>
    <recommendedName>
        <fullName evidence="1">NADH-quinone oxidoreductase subunit N</fullName>
        <ecNumber evidence="1">7.1.1.-</ecNumber>
    </recommendedName>
    <alternativeName>
        <fullName evidence="1">NADH dehydrogenase I subunit N</fullName>
    </alternativeName>
    <alternativeName>
        <fullName evidence="1">NDH-1 subunit N</fullName>
    </alternativeName>
</protein>